<reference key="1">
    <citation type="journal article" date="2010" name="J. Bacteriol.">
        <title>Whole genome sequences of two Xylella fastidiosa strains (M12 and M23) causing almond leaf scorch disease in California.</title>
        <authorList>
            <person name="Chen J."/>
            <person name="Xie G."/>
            <person name="Han S."/>
            <person name="Chertkov O."/>
            <person name="Sims D."/>
            <person name="Civerolo E.L."/>
        </authorList>
    </citation>
    <scope>NUCLEOTIDE SEQUENCE [LARGE SCALE GENOMIC DNA]</scope>
    <source>
        <strain>M23</strain>
    </source>
</reference>
<name>DUT_XYLF2</name>
<dbReference type="EC" id="3.6.1.23" evidence="1"/>
<dbReference type="EMBL" id="CP001011">
    <property type="protein sequence ID" value="ACB91569.1"/>
    <property type="molecule type" value="Genomic_DNA"/>
</dbReference>
<dbReference type="RefSeq" id="WP_004087579.1">
    <property type="nucleotide sequence ID" value="NC_010577.1"/>
</dbReference>
<dbReference type="SMR" id="B2I6M7"/>
<dbReference type="GeneID" id="93903810"/>
<dbReference type="KEGG" id="xfn:XfasM23_0112"/>
<dbReference type="HOGENOM" id="CLU_068508_1_1_6"/>
<dbReference type="UniPathway" id="UPA00610">
    <property type="reaction ID" value="UER00666"/>
</dbReference>
<dbReference type="Proteomes" id="UP000001698">
    <property type="component" value="Chromosome"/>
</dbReference>
<dbReference type="GO" id="GO:0004170">
    <property type="term" value="F:dUTP diphosphatase activity"/>
    <property type="evidence" value="ECO:0007669"/>
    <property type="project" value="UniProtKB-UniRule"/>
</dbReference>
<dbReference type="GO" id="GO:0000287">
    <property type="term" value="F:magnesium ion binding"/>
    <property type="evidence" value="ECO:0007669"/>
    <property type="project" value="UniProtKB-UniRule"/>
</dbReference>
<dbReference type="GO" id="GO:0006226">
    <property type="term" value="P:dUMP biosynthetic process"/>
    <property type="evidence" value="ECO:0007669"/>
    <property type="project" value="UniProtKB-UniRule"/>
</dbReference>
<dbReference type="GO" id="GO:0046081">
    <property type="term" value="P:dUTP catabolic process"/>
    <property type="evidence" value="ECO:0007669"/>
    <property type="project" value="InterPro"/>
</dbReference>
<dbReference type="CDD" id="cd07557">
    <property type="entry name" value="trimeric_dUTPase"/>
    <property type="match status" value="1"/>
</dbReference>
<dbReference type="FunFam" id="2.70.40.10:FF:000002">
    <property type="entry name" value="dUTP diphosphatase"/>
    <property type="match status" value="1"/>
</dbReference>
<dbReference type="Gene3D" id="2.70.40.10">
    <property type="match status" value="1"/>
</dbReference>
<dbReference type="HAMAP" id="MF_00116">
    <property type="entry name" value="dUTPase_bact"/>
    <property type="match status" value="1"/>
</dbReference>
<dbReference type="InterPro" id="IPR008181">
    <property type="entry name" value="dUTPase"/>
</dbReference>
<dbReference type="InterPro" id="IPR029054">
    <property type="entry name" value="dUTPase-like"/>
</dbReference>
<dbReference type="InterPro" id="IPR036157">
    <property type="entry name" value="dUTPase-like_sf"/>
</dbReference>
<dbReference type="InterPro" id="IPR033704">
    <property type="entry name" value="dUTPase_trimeric"/>
</dbReference>
<dbReference type="NCBIfam" id="TIGR00576">
    <property type="entry name" value="dut"/>
    <property type="match status" value="1"/>
</dbReference>
<dbReference type="NCBIfam" id="NF001862">
    <property type="entry name" value="PRK00601.1"/>
    <property type="match status" value="1"/>
</dbReference>
<dbReference type="PANTHER" id="PTHR11241">
    <property type="entry name" value="DEOXYURIDINE 5'-TRIPHOSPHATE NUCLEOTIDOHYDROLASE"/>
    <property type="match status" value="1"/>
</dbReference>
<dbReference type="PANTHER" id="PTHR11241:SF0">
    <property type="entry name" value="DEOXYURIDINE 5'-TRIPHOSPHATE NUCLEOTIDOHYDROLASE"/>
    <property type="match status" value="1"/>
</dbReference>
<dbReference type="Pfam" id="PF00692">
    <property type="entry name" value="dUTPase"/>
    <property type="match status" value="1"/>
</dbReference>
<dbReference type="SUPFAM" id="SSF51283">
    <property type="entry name" value="dUTPase-like"/>
    <property type="match status" value="1"/>
</dbReference>
<accession>B2I6M7</accession>
<sequence>MSAAVKPLQIKILDPRLGTVWPLPTYATEASAGLDLRAALDAPMTLVPGDAELLSTGIAIHLVDPSLCAVVLPRSGLGHRHGIVLGNGTGLIDSDYQGPLLVSVWNRGREAFTIEPGDRIAQLVVLPIVRVVLQVVDTFVESGRGAGGFGHTGVR</sequence>
<keyword id="KW-0378">Hydrolase</keyword>
<keyword id="KW-0460">Magnesium</keyword>
<keyword id="KW-0479">Metal-binding</keyword>
<keyword id="KW-0546">Nucleotide metabolism</keyword>
<proteinExistence type="inferred from homology"/>
<gene>
    <name evidence="1" type="primary">dut</name>
    <name type="ordered locus">XfasM23_0112</name>
</gene>
<protein>
    <recommendedName>
        <fullName evidence="1">Deoxyuridine 5'-triphosphate nucleotidohydrolase</fullName>
        <shortName evidence="1">dUTPase</shortName>
        <ecNumber evidence="1">3.6.1.23</ecNumber>
    </recommendedName>
    <alternativeName>
        <fullName evidence="1">dUTP pyrophosphatase</fullName>
    </alternativeName>
</protein>
<evidence type="ECO:0000255" key="1">
    <source>
        <dbReference type="HAMAP-Rule" id="MF_00116"/>
    </source>
</evidence>
<feature type="chain" id="PRO_1000095003" description="Deoxyuridine 5'-triphosphate nucleotidohydrolase">
    <location>
        <begin position="1"/>
        <end position="155"/>
    </location>
</feature>
<feature type="binding site" evidence="1">
    <location>
        <begin position="74"/>
        <end position="76"/>
    </location>
    <ligand>
        <name>substrate</name>
    </ligand>
</feature>
<feature type="binding site" evidence="1">
    <location>
        <position position="87"/>
    </location>
    <ligand>
        <name>substrate</name>
    </ligand>
</feature>
<feature type="binding site" evidence="1">
    <location>
        <begin position="91"/>
        <end position="93"/>
    </location>
    <ligand>
        <name>substrate</name>
    </ligand>
</feature>
<organism>
    <name type="scientific">Xylella fastidiosa (strain M23)</name>
    <dbReference type="NCBI Taxonomy" id="405441"/>
    <lineage>
        <taxon>Bacteria</taxon>
        <taxon>Pseudomonadati</taxon>
        <taxon>Pseudomonadota</taxon>
        <taxon>Gammaproteobacteria</taxon>
        <taxon>Lysobacterales</taxon>
        <taxon>Lysobacteraceae</taxon>
        <taxon>Xylella</taxon>
    </lineage>
</organism>
<comment type="function">
    <text evidence="1">This enzyme is involved in nucleotide metabolism: it produces dUMP, the immediate precursor of thymidine nucleotides and it decreases the intracellular concentration of dUTP so that uracil cannot be incorporated into DNA.</text>
</comment>
<comment type="catalytic activity">
    <reaction evidence="1">
        <text>dUTP + H2O = dUMP + diphosphate + H(+)</text>
        <dbReference type="Rhea" id="RHEA:10248"/>
        <dbReference type="ChEBI" id="CHEBI:15377"/>
        <dbReference type="ChEBI" id="CHEBI:15378"/>
        <dbReference type="ChEBI" id="CHEBI:33019"/>
        <dbReference type="ChEBI" id="CHEBI:61555"/>
        <dbReference type="ChEBI" id="CHEBI:246422"/>
        <dbReference type="EC" id="3.6.1.23"/>
    </reaction>
</comment>
<comment type="cofactor">
    <cofactor evidence="1">
        <name>Mg(2+)</name>
        <dbReference type="ChEBI" id="CHEBI:18420"/>
    </cofactor>
</comment>
<comment type="pathway">
    <text evidence="1">Pyrimidine metabolism; dUMP biosynthesis; dUMP from dCTP (dUTP route): step 2/2.</text>
</comment>
<comment type="similarity">
    <text evidence="1">Belongs to the dUTPase family.</text>
</comment>